<accession>B1MGC3</accession>
<sequence>MTIKLHHLRPAPGSKTERTRVGRGEGSKGKTAGRGTKGTKARKNVPVTFEGGQMPIHMRLPKLKGFKNRFRTEYQVVNVADIERLFPEGGDVTIEALVAKGAVRKNELVKVLGNGDLKVKVSVSANKFSDSAREKITAAGGSINEV</sequence>
<gene>
    <name evidence="1" type="primary">rplO</name>
    <name type="ordered locus">MAB_3793c</name>
</gene>
<feature type="chain" id="PRO_1000142845" description="Large ribosomal subunit protein uL15">
    <location>
        <begin position="1"/>
        <end position="146"/>
    </location>
</feature>
<feature type="region of interest" description="Disordered" evidence="2">
    <location>
        <begin position="1"/>
        <end position="45"/>
    </location>
</feature>
<feature type="compositionally biased region" description="Basic and acidic residues" evidence="2">
    <location>
        <begin position="15"/>
        <end position="28"/>
    </location>
</feature>
<proteinExistence type="inferred from homology"/>
<organism>
    <name type="scientific">Mycobacteroides abscessus (strain ATCC 19977 / DSM 44196 / CCUG 20993 / CIP 104536 / JCM 13569 / NCTC 13031 / TMC 1543 / L948)</name>
    <name type="common">Mycobacterium abscessus</name>
    <dbReference type="NCBI Taxonomy" id="561007"/>
    <lineage>
        <taxon>Bacteria</taxon>
        <taxon>Bacillati</taxon>
        <taxon>Actinomycetota</taxon>
        <taxon>Actinomycetes</taxon>
        <taxon>Mycobacteriales</taxon>
        <taxon>Mycobacteriaceae</taxon>
        <taxon>Mycobacteroides</taxon>
        <taxon>Mycobacteroides abscessus</taxon>
    </lineage>
</organism>
<name>RL15_MYCA9</name>
<evidence type="ECO:0000255" key="1">
    <source>
        <dbReference type="HAMAP-Rule" id="MF_01341"/>
    </source>
</evidence>
<evidence type="ECO:0000256" key="2">
    <source>
        <dbReference type="SAM" id="MobiDB-lite"/>
    </source>
</evidence>
<evidence type="ECO:0000305" key="3"/>
<dbReference type="EMBL" id="CU458896">
    <property type="protein sequence ID" value="CAM63868.1"/>
    <property type="molecule type" value="Genomic_DNA"/>
</dbReference>
<dbReference type="RefSeq" id="WP_005055720.1">
    <property type="nucleotide sequence ID" value="NZ_MLCG01000001.1"/>
</dbReference>
<dbReference type="SMR" id="B1MGC3"/>
<dbReference type="GeneID" id="93380733"/>
<dbReference type="KEGG" id="mab:MAB_3793c"/>
<dbReference type="Proteomes" id="UP000007137">
    <property type="component" value="Chromosome"/>
</dbReference>
<dbReference type="GO" id="GO:0022625">
    <property type="term" value="C:cytosolic large ribosomal subunit"/>
    <property type="evidence" value="ECO:0007669"/>
    <property type="project" value="TreeGrafter"/>
</dbReference>
<dbReference type="GO" id="GO:0019843">
    <property type="term" value="F:rRNA binding"/>
    <property type="evidence" value="ECO:0007669"/>
    <property type="project" value="UniProtKB-UniRule"/>
</dbReference>
<dbReference type="GO" id="GO:0003735">
    <property type="term" value="F:structural constituent of ribosome"/>
    <property type="evidence" value="ECO:0007669"/>
    <property type="project" value="InterPro"/>
</dbReference>
<dbReference type="GO" id="GO:0006412">
    <property type="term" value="P:translation"/>
    <property type="evidence" value="ECO:0007669"/>
    <property type="project" value="UniProtKB-UniRule"/>
</dbReference>
<dbReference type="FunFam" id="3.100.10.10:FF:000005">
    <property type="entry name" value="50S ribosomal protein L15"/>
    <property type="match status" value="1"/>
</dbReference>
<dbReference type="Gene3D" id="3.100.10.10">
    <property type="match status" value="1"/>
</dbReference>
<dbReference type="HAMAP" id="MF_01341">
    <property type="entry name" value="Ribosomal_uL15"/>
    <property type="match status" value="1"/>
</dbReference>
<dbReference type="InterPro" id="IPR030878">
    <property type="entry name" value="Ribosomal_uL15"/>
</dbReference>
<dbReference type="InterPro" id="IPR021131">
    <property type="entry name" value="Ribosomal_uL15/eL18"/>
</dbReference>
<dbReference type="InterPro" id="IPR036227">
    <property type="entry name" value="Ribosomal_uL15/eL18_sf"/>
</dbReference>
<dbReference type="InterPro" id="IPR005749">
    <property type="entry name" value="Ribosomal_uL15_bac-type"/>
</dbReference>
<dbReference type="InterPro" id="IPR001196">
    <property type="entry name" value="Ribosomal_uL15_CS"/>
</dbReference>
<dbReference type="NCBIfam" id="TIGR01071">
    <property type="entry name" value="rplO_bact"/>
    <property type="match status" value="1"/>
</dbReference>
<dbReference type="PANTHER" id="PTHR12934">
    <property type="entry name" value="50S RIBOSOMAL PROTEIN L15"/>
    <property type="match status" value="1"/>
</dbReference>
<dbReference type="PANTHER" id="PTHR12934:SF11">
    <property type="entry name" value="LARGE RIBOSOMAL SUBUNIT PROTEIN UL15M"/>
    <property type="match status" value="1"/>
</dbReference>
<dbReference type="Pfam" id="PF00828">
    <property type="entry name" value="Ribosomal_L27A"/>
    <property type="match status" value="1"/>
</dbReference>
<dbReference type="SUPFAM" id="SSF52080">
    <property type="entry name" value="Ribosomal proteins L15p and L18e"/>
    <property type="match status" value="1"/>
</dbReference>
<dbReference type="PROSITE" id="PS00475">
    <property type="entry name" value="RIBOSOMAL_L15"/>
    <property type="match status" value="1"/>
</dbReference>
<reference key="1">
    <citation type="journal article" date="2009" name="PLoS ONE">
        <title>Non mycobacterial virulence genes in the genome of the emerging pathogen Mycobacterium abscessus.</title>
        <authorList>
            <person name="Ripoll F."/>
            <person name="Pasek S."/>
            <person name="Schenowitz C."/>
            <person name="Dossat C."/>
            <person name="Barbe V."/>
            <person name="Rottman M."/>
            <person name="Macheras E."/>
            <person name="Heym B."/>
            <person name="Herrmann J.L."/>
            <person name="Daffe M."/>
            <person name="Brosch R."/>
            <person name="Risler J.L."/>
            <person name="Gaillard J.L."/>
        </authorList>
    </citation>
    <scope>NUCLEOTIDE SEQUENCE [LARGE SCALE GENOMIC DNA]</scope>
    <source>
        <strain>ATCC 19977 / DSM 44196 / CCUG 20993 / CIP 104536 / JCM 13569 / NCTC 13031 / TMC 1543 / L948</strain>
    </source>
</reference>
<protein>
    <recommendedName>
        <fullName evidence="1">Large ribosomal subunit protein uL15</fullName>
    </recommendedName>
    <alternativeName>
        <fullName evidence="3">50S ribosomal protein L15</fullName>
    </alternativeName>
</protein>
<comment type="function">
    <text evidence="1">Binds to the 23S rRNA.</text>
</comment>
<comment type="subunit">
    <text evidence="1">Part of the 50S ribosomal subunit.</text>
</comment>
<comment type="similarity">
    <text evidence="1">Belongs to the universal ribosomal protein uL15 family.</text>
</comment>
<keyword id="KW-1185">Reference proteome</keyword>
<keyword id="KW-0687">Ribonucleoprotein</keyword>
<keyword id="KW-0689">Ribosomal protein</keyword>
<keyword id="KW-0694">RNA-binding</keyword>
<keyword id="KW-0699">rRNA-binding</keyword>